<sequence>MKRISLTQYLIEEQRLHNNIPAELRLLLEVVARACKTISHAVGKGALGEVLGTAQSENVQGEVQKKLDIISNDILLEANEWGGHLAAMASEEMETIHQIPNRYPMGEYLLLFDPLDGSSNIDVNVSIGTIFSVLKAADGMQAPTEADFLQPGSKQVVAGYAVYGPQTVLVLTTGNGVQCFTLDREMGSWVMTQRDMQIPANTKEFAINASNARHWHPPVKRYVDEMLAGTTGPRAKDFNMRWIASMVADVHRILNRGGIFMYPADAREPDKPGKLRLMYEANPMAFIVEQAGGAATDGQQRILDIQPEKLHQRVPVFLGSKNEVELVTSYHKAK</sequence>
<accession>A6SVE7</accession>
<proteinExistence type="inferred from homology"/>
<comment type="catalytic activity">
    <reaction evidence="1">
        <text>beta-D-fructose 1,6-bisphosphate + H2O = beta-D-fructose 6-phosphate + phosphate</text>
        <dbReference type="Rhea" id="RHEA:11064"/>
        <dbReference type="ChEBI" id="CHEBI:15377"/>
        <dbReference type="ChEBI" id="CHEBI:32966"/>
        <dbReference type="ChEBI" id="CHEBI:43474"/>
        <dbReference type="ChEBI" id="CHEBI:57634"/>
        <dbReference type="EC" id="3.1.3.11"/>
    </reaction>
</comment>
<comment type="cofactor">
    <cofactor evidence="1">
        <name>Mg(2+)</name>
        <dbReference type="ChEBI" id="CHEBI:18420"/>
    </cofactor>
    <text evidence="1">Binds 2 magnesium ions per subunit.</text>
</comment>
<comment type="pathway">
    <text evidence="1">Carbohydrate biosynthesis; gluconeogenesis.</text>
</comment>
<comment type="subunit">
    <text evidence="1">Homotetramer.</text>
</comment>
<comment type="subcellular location">
    <subcellularLocation>
        <location evidence="1">Cytoplasm</location>
    </subcellularLocation>
</comment>
<comment type="similarity">
    <text evidence="1">Belongs to the FBPase class 1 family.</text>
</comment>
<keyword id="KW-0119">Carbohydrate metabolism</keyword>
<keyword id="KW-0963">Cytoplasm</keyword>
<keyword id="KW-0378">Hydrolase</keyword>
<keyword id="KW-0460">Magnesium</keyword>
<keyword id="KW-0479">Metal-binding</keyword>
<evidence type="ECO:0000255" key="1">
    <source>
        <dbReference type="HAMAP-Rule" id="MF_01855"/>
    </source>
</evidence>
<protein>
    <recommendedName>
        <fullName evidence="1">Fructose-1,6-bisphosphatase class 1</fullName>
        <shortName evidence="1">FBPase class 1</shortName>
        <ecNumber evidence="1">3.1.3.11</ecNumber>
    </recommendedName>
    <alternativeName>
        <fullName evidence="1">D-fructose-1,6-bisphosphate 1-phosphohydrolase class 1</fullName>
    </alternativeName>
</protein>
<reference key="1">
    <citation type="journal article" date="2007" name="PLoS Genet.">
        <title>Genome analysis of Minibacterium massiliensis highlights the convergent evolution of water-living bacteria.</title>
        <authorList>
            <person name="Audic S."/>
            <person name="Robert C."/>
            <person name="Campagna B."/>
            <person name="Parinello H."/>
            <person name="Claverie J.-M."/>
            <person name="Raoult D."/>
            <person name="Drancourt M."/>
        </authorList>
    </citation>
    <scope>NUCLEOTIDE SEQUENCE [LARGE SCALE GENOMIC DNA]</scope>
    <source>
        <strain>Marseille</strain>
    </source>
</reference>
<organism>
    <name type="scientific">Janthinobacterium sp. (strain Marseille)</name>
    <name type="common">Minibacterium massiliensis</name>
    <dbReference type="NCBI Taxonomy" id="375286"/>
    <lineage>
        <taxon>Bacteria</taxon>
        <taxon>Pseudomonadati</taxon>
        <taxon>Pseudomonadota</taxon>
        <taxon>Betaproteobacteria</taxon>
        <taxon>Burkholderiales</taxon>
        <taxon>Oxalobacteraceae</taxon>
        <taxon>Janthinobacterium</taxon>
    </lineage>
</organism>
<feature type="chain" id="PRO_0000364580" description="Fructose-1,6-bisphosphatase class 1">
    <location>
        <begin position="1"/>
        <end position="334"/>
    </location>
</feature>
<feature type="binding site" evidence="1">
    <location>
        <position position="91"/>
    </location>
    <ligand>
        <name>Mg(2+)</name>
        <dbReference type="ChEBI" id="CHEBI:18420"/>
        <label>1</label>
    </ligand>
</feature>
<feature type="binding site" evidence="1">
    <location>
        <position position="113"/>
    </location>
    <ligand>
        <name>Mg(2+)</name>
        <dbReference type="ChEBI" id="CHEBI:18420"/>
        <label>1</label>
    </ligand>
</feature>
<feature type="binding site" evidence="1">
    <location>
        <position position="113"/>
    </location>
    <ligand>
        <name>Mg(2+)</name>
        <dbReference type="ChEBI" id="CHEBI:18420"/>
        <label>2</label>
    </ligand>
</feature>
<feature type="binding site" evidence="1">
    <location>
        <position position="115"/>
    </location>
    <ligand>
        <name>Mg(2+)</name>
        <dbReference type="ChEBI" id="CHEBI:18420"/>
        <label>1</label>
    </ligand>
</feature>
<feature type="binding site" evidence="1">
    <location>
        <begin position="116"/>
        <end position="119"/>
    </location>
    <ligand>
        <name>substrate</name>
    </ligand>
</feature>
<feature type="binding site" evidence="1">
    <location>
        <position position="116"/>
    </location>
    <ligand>
        <name>Mg(2+)</name>
        <dbReference type="ChEBI" id="CHEBI:18420"/>
        <label>2</label>
    </ligand>
</feature>
<feature type="binding site" evidence="1">
    <location>
        <position position="208"/>
    </location>
    <ligand>
        <name>substrate</name>
    </ligand>
</feature>
<feature type="binding site" evidence="1">
    <location>
        <position position="274"/>
    </location>
    <ligand>
        <name>substrate</name>
    </ligand>
</feature>
<feature type="binding site" evidence="1">
    <location>
        <position position="280"/>
    </location>
    <ligand>
        <name>Mg(2+)</name>
        <dbReference type="ChEBI" id="CHEBI:18420"/>
        <label>2</label>
    </ligand>
</feature>
<dbReference type="EC" id="3.1.3.11" evidence="1"/>
<dbReference type="EMBL" id="CP000269">
    <property type="protein sequence ID" value="ABR88320.1"/>
    <property type="molecule type" value="Genomic_DNA"/>
</dbReference>
<dbReference type="RefSeq" id="WP_012078418.1">
    <property type="nucleotide sequence ID" value="NC_009659.1"/>
</dbReference>
<dbReference type="SMR" id="A6SVE7"/>
<dbReference type="STRING" id="375286.mma_0554"/>
<dbReference type="KEGG" id="mms:mma_0554"/>
<dbReference type="eggNOG" id="COG0158">
    <property type="taxonomic scope" value="Bacteria"/>
</dbReference>
<dbReference type="HOGENOM" id="CLU_039977_0_0_4"/>
<dbReference type="OrthoDB" id="9806756at2"/>
<dbReference type="UniPathway" id="UPA00138"/>
<dbReference type="Proteomes" id="UP000006388">
    <property type="component" value="Chromosome"/>
</dbReference>
<dbReference type="GO" id="GO:0005829">
    <property type="term" value="C:cytosol"/>
    <property type="evidence" value="ECO:0007669"/>
    <property type="project" value="TreeGrafter"/>
</dbReference>
<dbReference type="GO" id="GO:0042132">
    <property type="term" value="F:fructose 1,6-bisphosphate 1-phosphatase activity"/>
    <property type="evidence" value="ECO:0007669"/>
    <property type="project" value="UniProtKB-UniRule"/>
</dbReference>
<dbReference type="GO" id="GO:0000287">
    <property type="term" value="F:magnesium ion binding"/>
    <property type="evidence" value="ECO:0007669"/>
    <property type="project" value="UniProtKB-UniRule"/>
</dbReference>
<dbReference type="GO" id="GO:0030388">
    <property type="term" value="P:fructose 1,6-bisphosphate metabolic process"/>
    <property type="evidence" value="ECO:0007669"/>
    <property type="project" value="TreeGrafter"/>
</dbReference>
<dbReference type="GO" id="GO:0006002">
    <property type="term" value="P:fructose 6-phosphate metabolic process"/>
    <property type="evidence" value="ECO:0007669"/>
    <property type="project" value="TreeGrafter"/>
</dbReference>
<dbReference type="GO" id="GO:0006000">
    <property type="term" value="P:fructose metabolic process"/>
    <property type="evidence" value="ECO:0007669"/>
    <property type="project" value="TreeGrafter"/>
</dbReference>
<dbReference type="GO" id="GO:0006094">
    <property type="term" value="P:gluconeogenesis"/>
    <property type="evidence" value="ECO:0007669"/>
    <property type="project" value="UniProtKB-UniRule"/>
</dbReference>
<dbReference type="GO" id="GO:0005986">
    <property type="term" value="P:sucrose biosynthetic process"/>
    <property type="evidence" value="ECO:0007669"/>
    <property type="project" value="TreeGrafter"/>
</dbReference>
<dbReference type="CDD" id="cd00354">
    <property type="entry name" value="FBPase"/>
    <property type="match status" value="1"/>
</dbReference>
<dbReference type="FunFam" id="3.30.540.10:FF:000006">
    <property type="entry name" value="Fructose-1,6-bisphosphatase class 1"/>
    <property type="match status" value="1"/>
</dbReference>
<dbReference type="FunFam" id="3.40.190.80:FF:000011">
    <property type="entry name" value="Fructose-1,6-bisphosphatase class 1"/>
    <property type="match status" value="1"/>
</dbReference>
<dbReference type="Gene3D" id="3.40.190.80">
    <property type="match status" value="1"/>
</dbReference>
<dbReference type="Gene3D" id="3.30.540.10">
    <property type="entry name" value="Fructose-1,6-Bisphosphatase, subunit A, domain 1"/>
    <property type="match status" value="1"/>
</dbReference>
<dbReference type="HAMAP" id="MF_01855">
    <property type="entry name" value="FBPase_class1"/>
    <property type="match status" value="1"/>
</dbReference>
<dbReference type="InterPro" id="IPR044015">
    <property type="entry name" value="FBPase_C_dom"/>
</dbReference>
<dbReference type="InterPro" id="IPR000146">
    <property type="entry name" value="FBPase_class-1"/>
</dbReference>
<dbReference type="InterPro" id="IPR033391">
    <property type="entry name" value="FBPase_N"/>
</dbReference>
<dbReference type="InterPro" id="IPR028343">
    <property type="entry name" value="FBPtase"/>
</dbReference>
<dbReference type="NCBIfam" id="NF006778">
    <property type="entry name" value="PRK09293.1-1"/>
    <property type="match status" value="1"/>
</dbReference>
<dbReference type="NCBIfam" id="NF006779">
    <property type="entry name" value="PRK09293.1-3"/>
    <property type="match status" value="1"/>
</dbReference>
<dbReference type="NCBIfam" id="NF006780">
    <property type="entry name" value="PRK09293.1-4"/>
    <property type="match status" value="1"/>
</dbReference>
<dbReference type="PANTHER" id="PTHR11556">
    <property type="entry name" value="FRUCTOSE-1,6-BISPHOSPHATASE-RELATED"/>
    <property type="match status" value="1"/>
</dbReference>
<dbReference type="PANTHER" id="PTHR11556:SF35">
    <property type="entry name" value="SEDOHEPTULOSE-1,7-BISPHOSPHATASE, CHLOROPLASTIC"/>
    <property type="match status" value="1"/>
</dbReference>
<dbReference type="Pfam" id="PF00316">
    <property type="entry name" value="FBPase"/>
    <property type="match status" value="1"/>
</dbReference>
<dbReference type="Pfam" id="PF18913">
    <property type="entry name" value="FBPase_C"/>
    <property type="match status" value="1"/>
</dbReference>
<dbReference type="PIRSF" id="PIRSF500210">
    <property type="entry name" value="FBPtase"/>
    <property type="match status" value="1"/>
</dbReference>
<dbReference type="PIRSF" id="PIRSF000904">
    <property type="entry name" value="FBPtase_SBPase"/>
    <property type="match status" value="1"/>
</dbReference>
<dbReference type="PRINTS" id="PR00115">
    <property type="entry name" value="F16BPHPHTASE"/>
</dbReference>
<dbReference type="SUPFAM" id="SSF56655">
    <property type="entry name" value="Carbohydrate phosphatase"/>
    <property type="match status" value="1"/>
</dbReference>
<name>F16PA_JANMA</name>
<gene>
    <name evidence="1" type="primary">fbp</name>
    <name type="ordered locus">mma_0554</name>
</gene>